<feature type="initiator methionine" description="Removed" evidence="2 3">
    <location>
        <position position="1"/>
    </location>
</feature>
<feature type="chain" id="PRO_0000096803" description="Salicylate hydroxylase">
    <location>
        <begin position="2"/>
        <end position="434"/>
    </location>
</feature>
<feature type="binding site" evidence="1">
    <location>
        <begin position="9"/>
        <end position="38"/>
    </location>
    <ligand>
        <name>FAD</name>
        <dbReference type="ChEBI" id="CHEBI:57692"/>
    </ligand>
</feature>
<feature type="strand" evidence="4">
    <location>
        <begin position="8"/>
        <end position="13"/>
    </location>
</feature>
<feature type="helix" evidence="4">
    <location>
        <begin position="17"/>
        <end position="26"/>
    </location>
</feature>
<feature type="strand" evidence="4">
    <location>
        <begin position="32"/>
        <end position="37"/>
    </location>
</feature>
<feature type="helix" evidence="4">
    <location>
        <begin position="44"/>
        <end position="46"/>
    </location>
</feature>
<feature type="helix" evidence="4">
    <location>
        <begin position="54"/>
        <end position="62"/>
    </location>
</feature>
<feature type="helix" evidence="4">
    <location>
        <begin position="66"/>
        <end position="72"/>
    </location>
</feature>
<feature type="strand" evidence="4">
    <location>
        <begin position="83"/>
        <end position="89"/>
    </location>
</feature>
<feature type="turn" evidence="4">
    <location>
        <begin position="90"/>
        <end position="92"/>
    </location>
</feature>
<feature type="strand" evidence="4">
    <location>
        <begin position="95"/>
        <end position="100"/>
    </location>
</feature>
<feature type="turn" evidence="4">
    <location>
        <begin position="102"/>
        <end position="104"/>
    </location>
</feature>
<feature type="strand" evidence="4">
    <location>
        <begin position="105"/>
        <end position="109"/>
    </location>
</feature>
<feature type="helix" evidence="4">
    <location>
        <begin position="111"/>
        <end position="120"/>
    </location>
</feature>
<feature type="strand" evidence="4">
    <location>
        <begin position="133"/>
        <end position="138"/>
    </location>
</feature>
<feature type="strand" evidence="4">
    <location>
        <begin position="143"/>
        <end position="147"/>
    </location>
</feature>
<feature type="strand" evidence="4">
    <location>
        <begin position="152"/>
        <end position="160"/>
    </location>
</feature>
<feature type="helix" evidence="4">
    <location>
        <begin position="168"/>
        <end position="175"/>
    </location>
</feature>
<feature type="strand" evidence="4">
    <location>
        <begin position="184"/>
        <end position="196"/>
    </location>
</feature>
<feature type="helix" evidence="4">
    <location>
        <begin position="197"/>
        <end position="206"/>
    </location>
</feature>
<feature type="helix" evidence="4">
    <location>
        <begin position="212"/>
        <end position="215"/>
    </location>
</feature>
<feature type="strand" evidence="4">
    <location>
        <begin position="218"/>
        <end position="222"/>
    </location>
</feature>
<feature type="strand" evidence="4">
    <location>
        <begin position="225"/>
        <end position="232"/>
    </location>
</feature>
<feature type="turn" evidence="4">
    <location>
        <begin position="233"/>
        <end position="236"/>
    </location>
</feature>
<feature type="strand" evidence="4">
    <location>
        <begin position="237"/>
        <end position="245"/>
    </location>
</feature>
<feature type="strand" evidence="4">
    <location>
        <begin position="260"/>
        <end position="263"/>
    </location>
</feature>
<feature type="helix" evidence="4">
    <location>
        <begin position="266"/>
        <end position="272"/>
    </location>
</feature>
<feature type="turn" evidence="4">
    <location>
        <begin position="273"/>
        <end position="275"/>
    </location>
</feature>
<feature type="helix" evidence="4">
    <location>
        <begin position="278"/>
        <end position="285"/>
    </location>
</feature>
<feature type="strand" evidence="4">
    <location>
        <begin position="291"/>
        <end position="297"/>
    </location>
</feature>
<feature type="strand" evidence="4">
    <location>
        <begin position="304"/>
        <end position="306"/>
    </location>
</feature>
<feature type="strand" evidence="4">
    <location>
        <begin position="309"/>
        <end position="311"/>
    </location>
</feature>
<feature type="helix" evidence="4">
    <location>
        <begin position="314"/>
        <end position="317"/>
    </location>
</feature>
<feature type="helix" evidence="4">
    <location>
        <begin position="321"/>
        <end position="323"/>
    </location>
</feature>
<feature type="helix" evidence="4">
    <location>
        <begin position="326"/>
        <end position="341"/>
    </location>
</feature>
<feature type="helix" evidence="4">
    <location>
        <begin position="351"/>
        <end position="361"/>
    </location>
</feature>
<feature type="helix" evidence="4">
    <location>
        <begin position="363"/>
        <end position="380"/>
    </location>
</feature>
<feature type="turn" evidence="4">
    <location>
        <begin position="385"/>
        <end position="389"/>
    </location>
</feature>
<feature type="helix" evidence="4">
    <location>
        <begin position="391"/>
        <end position="400"/>
    </location>
</feature>
<feature type="helix" evidence="4">
    <location>
        <begin position="403"/>
        <end position="406"/>
    </location>
</feature>
<feature type="helix" evidence="4">
    <location>
        <begin position="410"/>
        <end position="421"/>
    </location>
</feature>
<sequence length="434" mass="46964">MKNNKLGLRIGIVGGGISGVALALELCRYSHIQVQLFEAAPAFGEVGAGVSFGPNAVRAIVGLGLGEAYLQVADRTSEPWEDVWFEWRRGSDASYLGATIAPGVGQSSVHRADFIDALVTHLPEGIAQFGKRATQVEQQGGEVQVLFTDGTEYRCDLLIGADGIKSALRSHVLEGQGLAPQVPRFSGTCAYRGMVDSLHLREAYRAHGIDEHLVDVPQMYLGLDGHILTFPVRNGGIINVVAFISDRSEPKPTWPADAPWVREASQREMLDAFAGWGDAARALLECIPAPTLWALHDLAELPGYVHGRVVLIGDAAHAMLPHQGAGAGQGLEDAYFLARLLGDTQADAGNLAELLEAYDDLRRPRACRVQQTSWETGELYELRDPVVGANEQLLGENLATRFDWLWNHDLDTDLAEARARLGWEHGGGGALRQG</sequence>
<evidence type="ECO:0000255" key="1"/>
<evidence type="ECO:0000269" key="2">
    <source>
    </source>
</evidence>
<evidence type="ECO:0000269" key="3">
    <source>
    </source>
</evidence>
<evidence type="ECO:0007829" key="4">
    <source>
        <dbReference type="PDB" id="6BZ5"/>
    </source>
</evidence>
<geneLocation type="plasmid">
    <name>NAH7</name>
</geneLocation>
<dbReference type="EC" id="1.14.13.1"/>
<dbReference type="EMBL" id="M60055">
    <property type="protein sequence ID" value="AAA25897.1"/>
    <property type="molecule type" value="Genomic_DNA"/>
</dbReference>
<dbReference type="PIR" id="A39181">
    <property type="entry name" value="A39181"/>
</dbReference>
<dbReference type="RefSeq" id="YP_534831.1">
    <property type="nucleotide sequence ID" value="NC_007926.1"/>
</dbReference>
<dbReference type="PDB" id="6BZ5">
    <property type="method" value="X-ray"/>
    <property type="resolution" value="2.01 A"/>
    <property type="chains" value="A/B=1-434"/>
</dbReference>
<dbReference type="PDBsum" id="6BZ5"/>
<dbReference type="SMR" id="P23262"/>
<dbReference type="KEGG" id="ag:AAA25897"/>
<dbReference type="BioCyc" id="MetaCyc:MONOMER-12811"/>
<dbReference type="UniPathway" id="UPA00082"/>
<dbReference type="GO" id="GO:0071949">
    <property type="term" value="F:FAD binding"/>
    <property type="evidence" value="ECO:0007669"/>
    <property type="project" value="InterPro"/>
</dbReference>
<dbReference type="GO" id="GO:0018658">
    <property type="term" value="F:salicylate 1-monooxygenase activity"/>
    <property type="evidence" value="ECO:0007669"/>
    <property type="project" value="UniProtKB-EC"/>
</dbReference>
<dbReference type="GO" id="GO:0009056">
    <property type="term" value="P:catabolic process"/>
    <property type="evidence" value="ECO:0007669"/>
    <property type="project" value="UniProtKB-KW"/>
</dbReference>
<dbReference type="GO" id="GO:0044550">
    <property type="term" value="P:secondary metabolite biosynthetic process"/>
    <property type="evidence" value="ECO:0007669"/>
    <property type="project" value="TreeGrafter"/>
</dbReference>
<dbReference type="Gene3D" id="3.50.50.60">
    <property type="entry name" value="FAD/NAD(P)-binding domain"/>
    <property type="match status" value="1"/>
</dbReference>
<dbReference type="InterPro" id="IPR002938">
    <property type="entry name" value="FAD-bd"/>
</dbReference>
<dbReference type="InterPro" id="IPR036188">
    <property type="entry name" value="FAD/NAD-bd_sf"/>
</dbReference>
<dbReference type="InterPro" id="IPR051104">
    <property type="entry name" value="FAD_monoxygenase"/>
</dbReference>
<dbReference type="InterPro" id="IPR017631">
    <property type="entry name" value="Salicylate_mOase"/>
</dbReference>
<dbReference type="NCBIfam" id="TIGR03219">
    <property type="entry name" value="salicylate_mono"/>
    <property type="match status" value="1"/>
</dbReference>
<dbReference type="PANTHER" id="PTHR46720:SF3">
    <property type="entry name" value="FAD-BINDING DOMAIN-CONTAINING PROTEIN-RELATED"/>
    <property type="match status" value="1"/>
</dbReference>
<dbReference type="PANTHER" id="PTHR46720">
    <property type="entry name" value="HYDROXYLASE, PUTATIVE (AFU_ORTHOLOGUE AFUA_3G01460)-RELATED"/>
    <property type="match status" value="1"/>
</dbReference>
<dbReference type="Pfam" id="PF01494">
    <property type="entry name" value="FAD_binding_3"/>
    <property type="match status" value="2"/>
</dbReference>
<dbReference type="PRINTS" id="PR00420">
    <property type="entry name" value="RNGMNOXGNASE"/>
</dbReference>
<dbReference type="SUPFAM" id="SSF54373">
    <property type="entry name" value="FAD-linked reductases, C-terminal domain"/>
    <property type="match status" value="1"/>
</dbReference>
<dbReference type="SUPFAM" id="SSF51905">
    <property type="entry name" value="FAD/NAD(P)-binding domain"/>
    <property type="match status" value="1"/>
</dbReference>
<proteinExistence type="evidence at protein level"/>
<protein>
    <recommendedName>
        <fullName>Salicylate hydroxylase</fullName>
        <ecNumber>1.14.13.1</ecNumber>
    </recommendedName>
    <alternativeName>
        <fullName>Salicylate 1-monooxygenase</fullName>
    </alternativeName>
</protein>
<gene>
    <name type="primary">nahG</name>
</gene>
<keyword id="KW-0002">3D-structure</keyword>
<keyword id="KW-0058">Aromatic hydrocarbons catabolism</keyword>
<keyword id="KW-0903">Direct protein sequencing</keyword>
<keyword id="KW-0274">FAD</keyword>
<keyword id="KW-0285">Flavoprotein</keyword>
<keyword id="KW-0503">Monooxygenase</keyword>
<keyword id="KW-0520">NAD</keyword>
<keyword id="KW-0560">Oxidoreductase</keyword>
<keyword id="KW-0614">Plasmid</keyword>
<organism>
    <name type="scientific">Pseudomonas putida</name>
    <name type="common">Arthrobacter siderocapsulatus</name>
    <dbReference type="NCBI Taxonomy" id="303"/>
    <lineage>
        <taxon>Bacteria</taxon>
        <taxon>Pseudomonadati</taxon>
        <taxon>Pseudomonadota</taxon>
        <taxon>Gammaproteobacteria</taxon>
        <taxon>Pseudomonadales</taxon>
        <taxon>Pseudomonadaceae</taxon>
        <taxon>Pseudomonas</taxon>
    </lineage>
</organism>
<reference key="1">
    <citation type="journal article" date="1991" name="Biochemistry">
        <title>Nucleotide sequence analysis of the Pseudomonas putida PpG7 salicylate hydroxylase gene (nahG) and its 3'-flanking region.</title>
        <authorList>
            <person name="You I.-S."/>
            <person name="Ghosal D."/>
            <person name="Gunsalus I.C."/>
        </authorList>
    </citation>
    <scope>NUCLEOTIDE SEQUENCE [GENOMIC DNA]</scope>
    <scope>PROTEIN SEQUENCE OF 2-26</scope>
    <source>
        <strain>ATCC 17485 / DSM 50208 / JCM 6158 / NCIMB 12092 / Stanier 111 / Biotype A</strain>
    </source>
</reference>
<reference key="2">
    <citation type="journal article" date="1990" name="Biochem. Biophys. Res. Commun.">
        <title>Purification and characterization of salicylate hydroxylase from Pseudomonas putida PpG7.</title>
        <authorList>
            <person name="You I.-S."/>
            <person name="Murray R.I."/>
            <person name="Jollie D."/>
            <person name="Gunsalus I.C."/>
        </authorList>
    </citation>
    <scope>PROTEIN SEQUENCE OF 2-26</scope>
    <scope>SUBUNIT</scope>
</reference>
<comment type="catalytic activity">
    <reaction>
        <text>salicylate + NADH + O2 + 2 H(+) = catechol + CO2 + NAD(+) + H2O</text>
        <dbReference type="Rhea" id="RHEA:11004"/>
        <dbReference type="ChEBI" id="CHEBI:15377"/>
        <dbReference type="ChEBI" id="CHEBI:15378"/>
        <dbReference type="ChEBI" id="CHEBI:15379"/>
        <dbReference type="ChEBI" id="CHEBI:16526"/>
        <dbReference type="ChEBI" id="CHEBI:18135"/>
        <dbReference type="ChEBI" id="CHEBI:30762"/>
        <dbReference type="ChEBI" id="CHEBI:57540"/>
        <dbReference type="ChEBI" id="CHEBI:57945"/>
        <dbReference type="EC" id="1.14.13.1"/>
    </reaction>
</comment>
<comment type="cofactor">
    <cofactor>
        <name>FAD</name>
        <dbReference type="ChEBI" id="CHEBI:57692"/>
    </cofactor>
</comment>
<comment type="pathway">
    <text>Aromatic compound metabolism; naphthalene degradation.</text>
</comment>
<comment type="subunit">
    <text evidence="3">Monomer.</text>
</comment>
<accession>P23262</accession>
<name>NHG1_PSEPU</name>